<gene>
    <name type="primary">dnaK</name>
</gene>
<accession>P81875</accession>
<reference key="1">
    <citation type="journal article" date="1999" name="Electrophoresis">
        <title>Induction of heat shock proteins in response to primary alcohols in Acinetobacter calcoaceticus.</title>
        <authorList>
            <person name="Benndorf D."/>
            <person name="Loffhagen N."/>
            <person name="Babel W."/>
        </authorList>
    </citation>
    <scope>PROTEIN SEQUENCE</scope>
    <source>
        <strain>69-V</strain>
    </source>
</reference>
<organism>
    <name type="scientific">Acinetobacter calcoaceticus</name>
    <dbReference type="NCBI Taxonomy" id="471"/>
    <lineage>
        <taxon>Bacteria</taxon>
        <taxon>Pseudomonadati</taxon>
        <taxon>Pseudomonadota</taxon>
        <taxon>Gammaproteobacteria</taxon>
        <taxon>Moraxellales</taxon>
        <taxon>Moraxellaceae</taxon>
        <taxon>Acinetobacter</taxon>
        <taxon>Acinetobacter calcoaceticus/baumannii complex</taxon>
    </lineage>
</organism>
<proteinExistence type="evidence at protein level"/>
<comment type="function">
    <text evidence="1">Acts as a chaperone.</text>
</comment>
<comment type="induction">
    <text>By heat shock and primary alcohols.</text>
</comment>
<comment type="similarity">
    <text evidence="2">Belongs to the heat shock protein 70 family.</text>
</comment>
<feature type="chain" id="PRO_0000078403" description="Chaperone protein DnaK">
    <location>
        <begin position="1"/>
        <end position="25" status="greater than"/>
    </location>
</feature>
<feature type="non-terminal residue">
    <location>
        <position position="25"/>
    </location>
</feature>
<sequence length="25" mass="2666">AKIIGIDGLTTNSWVAVLESDKVHV</sequence>
<protein>
    <recommendedName>
        <fullName>Chaperone protein DnaK</fullName>
    </recommendedName>
    <alternativeName>
        <fullName>HSP70</fullName>
    </alternativeName>
    <alternativeName>
        <fullName>Heat shock 70 kDa protein</fullName>
    </alternativeName>
    <alternativeName>
        <fullName>Heat shock protein 70</fullName>
    </alternativeName>
</protein>
<evidence type="ECO:0000250" key="1"/>
<evidence type="ECO:0000305" key="2"/>
<dbReference type="GO" id="GO:0005524">
    <property type="term" value="F:ATP binding"/>
    <property type="evidence" value="ECO:0007669"/>
    <property type="project" value="UniProtKB-KW"/>
</dbReference>
<keyword id="KW-0067">ATP-binding</keyword>
<keyword id="KW-0143">Chaperone</keyword>
<keyword id="KW-0903">Direct protein sequencing</keyword>
<keyword id="KW-0547">Nucleotide-binding</keyword>
<keyword id="KW-0346">Stress response</keyword>
<name>DNAK_ACICA</name>